<organismHost>
    <name type="scientific">Oncorhynchus mykiss</name>
    <name type="common">Rainbow trout</name>
    <name type="synonym">Salmo gairdneri</name>
    <dbReference type="NCBI Taxonomy" id="8022"/>
</organismHost>
<organismHost>
    <name type="scientific">Salmo salar</name>
    <name type="common">Atlantic salmon</name>
    <dbReference type="NCBI Taxonomy" id="8030"/>
</organismHost>
<proteinExistence type="inferred from homology"/>
<accession>Q8QL52</accession>
<accession>Q9Q1V0</accession>
<reference key="1">
    <citation type="journal article" date="2000" name="J. Virol.">
        <title>Rainbow trout sleeping disease virus is an atypical alphavirus.</title>
        <authorList>
            <person name="Villoing S."/>
            <person name="Bearzotti M."/>
            <person name="Chilmonczyk S."/>
            <person name="Castric J."/>
            <person name="Bremont M."/>
        </authorList>
    </citation>
    <scope>NUCLEOTIDE SEQUENCE [GENOMIC RNA]</scope>
</reference>
<reference key="2">
    <citation type="journal article" date="2002" name="J. Virol.">
        <title>Comparison of two aquatic alphaviruses, Salmon pancreas disease virus and Sleeping disease virus, by using genome sequence analysis, monoclonal reactivity and cross-infection.</title>
        <authorList>
            <person name="Weston J.H."/>
            <person name="Villoing S."/>
            <person name="Bremont M."/>
            <person name="Castric J."/>
            <person name="Pfeffer M."/>
            <person name="Jewhurst V."/>
            <person name="McLoughlin M."/>
            <person name="Rodseth O."/>
            <person name="Christie K.E."/>
            <person name="Koumans J."/>
            <person name="Todd D."/>
        </authorList>
    </citation>
    <scope>NUCLEOTIDE SEQUENCE [GENOMIC RNA]</scope>
    <source>
        <strain>S49P</strain>
    </source>
</reference>
<comment type="function">
    <molecule>Capsid protein</molecule>
    <text evidence="2 3 8">Forms an icosahedral capsid with a T=4 symmetry composed of 240 copies of the capsid protein surrounded by a lipid membrane through which penetrate 80 spikes composed of trimers of E1-E2 heterodimers (By similarity). The capsid protein binds to the viral RNA genome at a site adjacent to a ribosome binding site for viral genome translation following genome release (By similarity). Possesses a protease activity that results in its autocatalytic cleavage from the nascent structural protein (By similarity). Following its self-cleavage, the capsid protein transiently associates with ribosomes, and within several minutes the protein binds to viral RNA and rapidly assembles into icosahedric core particles (By similarity). The resulting nucleocapsid eventually associates with the cytoplasmic domain of the spike glycoprotein E2 at the cell membrane, leading to budding and formation of mature virions (By similarity). In case of infection, new virions attach to target cells and after clathrin-mediated endocytosis their membrane fuses with the host endosomal membrane (By similarity). This leads to the release of the nucleocapsid into the cytoplasm, followed by an uncoating event necessary for the genomic RNA to become accessible (By similarity). The uncoating might be triggered by the interaction of capsid proteins with ribosomes (By similarity). Binding of ribosomes would release the genomic RNA since the same region is genomic RNA-binding and ribosome-binding (By similarity). Specifically inhibits interleukin-1 receptor-associated kinase 1/IRAK1-dependent signaling during viral entry, representing a means by which the alphaviruses may evade innate immune detection and activation prior to viral gene expression (By similarity).</text>
</comment>
<comment type="function">
    <molecule>Assembly protein E3</molecule>
    <text evidence="2">Provides the signal sequence for the translocation of the precursor of protein E3/E2 to the host endoplasmic reticulum. Furin-cleaved E3 remains associated with spike glycoprotein E1 and mediates pH protection of the latter during the transport via the secretory pathway. After virion release from the host cell, the assembly protein E3 is gradually released in the extracellular space.</text>
</comment>
<comment type="function">
    <molecule>Spike glycoprotein E2</molecule>
    <text evidence="3">Plays a role in viral attachment to target host cell, by binding to the cell receptor. Synthesized as a p62 precursor which is processed by furin at the cell membrane just before virion budding, giving rise to E2-E1 heterodimer. The p62-E1 heterodimer is stable, whereas E2-E1 is unstable and dissociate at low pH. p62 is processed at the last step, presumably to avoid E1 fusion activation before its final export to cell surface. E2 C-terminus contains a transitory transmembrane that would be disrupted by palmitoylation, resulting in reorientation of the C-terminal tail from lumenal to cytoplasmic side. This step is critical since E2 C-terminus is involved in budding by interacting with capsid proteins. This release of E2 C-terminus in cytoplasm occurs lately in protein export, and precludes premature assembly of particles at the endoplasmic reticulum membrane.</text>
</comment>
<comment type="function">
    <molecule>6K protein</molecule>
    <text evidence="2 3">Acts as a viroporin that participates in virus glycoprotein processing and transport to the plasma membrane, cell permeabilization and budding of viral particles (By similarity). Disrupts the calcium homeostasis of the cell, probably at the endoplasmic reticulum level (By similarity). This leads to cytoplasmic calcium elevation (By similarity). Because of its lipophilic properties, the 6K protein is postulated to influence the selection of lipids that interact with the transmembrane domains of the glycoproteins, which, in turn, affects the deformability of the bilayer required for the extreme curvature that occurs as budding proceeds. Present in low amount in virions, about 3% compared to viral glycoproteins (By similarity).</text>
</comment>
<comment type="function">
    <molecule>Spike glycoprotein E1</molecule>
    <text evidence="2">Class II viral fusion protein. Fusion activity is inactive as long as E1 is bound to E2 in mature virion. After virus attachment to target cell and endocytosis, acidification of the endosome induce dissociation of E1/E2 heterodimer and concomitant trimerization of the E1 subunits. This E1 trimer is fusion active, and promotes release of viral nucleocapsid in cytoplasm after endosome and viral membrane fusion. Efficient fusion requires the presence of cholesterol and sphingolipid in the target membrane.</text>
</comment>
<comment type="catalytic activity">
    <reaction evidence="2">
        <text>Autocatalytic release of the core protein from the N-terminus of the togavirus structural polyprotein by hydrolysis of a -Trp-|-Ser- bond.</text>
        <dbReference type="EC" id="3.4.21.90"/>
    </reaction>
</comment>
<comment type="subunit">
    <molecule>Capsid protein</molecule>
    <text evidence="3 10 11">Homodimer (By similarity). Homomultimer (By similarity). Interacts with host karyopherin KPNA4; this interaction allows the nuclear import of the viral capsid protein (By similarity). Interacts with spike glycoprotein E2 (By similarity). Interacts with host IRAK1; the interaction leads to inhibition of IRAK1-dependent signaling (By similarity).</text>
</comment>
<comment type="subunit">
    <molecule>Precursor of protein E3/E2</molecule>
    <text evidence="2 3 6 11">The precursor of protein E3/E2 and E1 form a heterodimer shortly after synthesis (By similarity).</text>
</comment>
<comment type="subunit">
    <molecule>Spike glycoprotein E1</molecule>
    <text evidence="3 11">Interacts with spike glycoprotein E2 (By similarity). The precursor of protein E3/E2 and E1 form a heterodimer shortly after synthesis (By similarity). Processing of the precursor of protein E3/E2 into E2 and E3 results in a heterodimer of the spike glycoproteins E2 and E1 (By similarity). Spike at virion surface are constituted of three E2-E1 heterodimers (By similarity). After target cell attachment and endocytosis, E1 change conformation to form homotrimers (By similarity). Interacts with 6K protein (By similarity).</text>
</comment>
<comment type="subunit">
    <molecule>Spike glycoprotein E2</molecule>
    <text evidence="3">Interacts with spike glycoprotein E1 (By similarity). Processing of the precursor of protein E3/E2 into E2 and E3 results in a heterodimer of the spike glycoproteins E2 and E1 (By similarity). Spike at virion surface are constituted of a trimer of E2-E1 heterodimers (By similarity). Interacts with 6K protein (By similarity).</text>
</comment>
<comment type="subunit">
    <molecule>6K protein</molecule>
    <text evidence="3 9">Oligomer (By similarity). Interacts with spike glycoprotein E1. Interacts with spike glycoprotein E2 (By similarity).</text>
</comment>
<comment type="subcellular location">
    <molecule>Capsid protein</molecule>
    <subcellularLocation>
        <location evidence="3">Virion</location>
    </subcellularLocation>
    <subcellularLocation>
        <location evidence="11">Host cytoplasm</location>
    </subcellularLocation>
    <subcellularLocation>
        <location evidence="3">Host cell membrane</location>
    </subcellularLocation>
    <subcellularLocation>
        <location evidence="11">Host nucleus</location>
    </subcellularLocation>
    <text evidence="11">Shuttles between the cytoplasm and the nucleus.</text>
</comment>
<comment type="subcellular location">
    <molecule>Spike glycoprotein E2</molecule>
    <subcellularLocation>
        <location evidence="11">Virion membrane</location>
        <topology evidence="12">Single-pass type I membrane protein</topology>
    </subcellularLocation>
    <subcellularLocation>
        <location evidence="3">Host cell membrane</location>
        <topology evidence="11">Single-pass type I membrane protein</topology>
    </subcellularLocation>
</comment>
<comment type="subcellular location">
    <molecule>6K protein</molecule>
    <subcellularLocation>
        <location evidence="3">Host cell membrane</location>
        <topology evidence="12">Multi-pass membrane protein</topology>
    </subcellularLocation>
    <subcellularLocation>
        <location evidence="3">Virion membrane</location>
        <topology evidence="12">Multi-pass membrane protein</topology>
    </subcellularLocation>
    <subcellularLocation>
        <location evidence="3">Host Golgi apparatus</location>
    </subcellularLocation>
    <subcellularLocation>
        <location>Host Golgi apparatus</location>
        <location>Host trans-Golgi network</location>
    </subcellularLocation>
    <subcellularLocation>
        <location evidence="3">Host endoplasmic reticulum</location>
    </subcellularLocation>
</comment>
<comment type="subcellular location">
    <molecule>Spike glycoprotein E1</molecule>
    <subcellularLocation>
        <location evidence="11">Virion membrane</location>
        <topology evidence="12">Single-pass type I membrane protein</topology>
    </subcellularLocation>
    <subcellularLocation>
        <location evidence="3 11">Host cell membrane</location>
        <topology evidence="12">Single-pass type I membrane protein</topology>
    </subcellularLocation>
</comment>
<comment type="domain">
    <molecule>Capsid protein</molecule>
    <text evidence="3 5">The very N-terminus also plays a role in the particle assembly process (By similarity). The N-terminus also contains a nuclear localization signal and a supra nuclear export signal (supraNES), which is an unusually strong NES that mediates host CRM1 binding in the absence of RanGTP and thus can bind CRM1, not only in the nucleus, but also in the cytoplasm (By similarity). The C-terminus functions as a protease during translation to cleave itself from the translating structural polyprotein (By similarity).</text>
</comment>
<comment type="domain">
    <text evidence="2">Structural polyprotein: As soon as the capsid protein has been autocleaved, an internal uncleaved signal peptide directs the remaining polyprotein to the endoplasmic reticulum.</text>
</comment>
<comment type="PTM">
    <text evidence="2">Structural polyprotein: Specific enzymatic cleavages in vivo yield mature proteins. Capsid protein is auto-cleaved during polyprotein translation, unmasking a signal peptide at the N-terminus of the precursor of E3/E2 (By similarity). The remaining polyprotein is then targeted to the host endoplasmic reticulum, where host signal peptidase cleaves it into pE2, 6K and E1 proteins. pE2 is further processed to mature E3 and E2 by host furin in trans-Golgi vesicle (By similarity).</text>
</comment>
<comment type="PTM">
    <molecule>Spike glycoprotein E2</molecule>
    <text evidence="2">Palmitoylated via thioester bonds. These palmitoylations may induce disruption of the C-terminus transmembrane. This would result in the reorientation of E2 C-terminus from lumenal to cytoplasmic side.</text>
</comment>
<comment type="PTM">
    <molecule>Spike glycoprotein E1</molecule>
    <text evidence="2">N-glycosylated.</text>
</comment>
<comment type="PTM">
    <molecule>Spike glycoprotein E2</molecule>
    <text evidence="2">N-glycosylated.</text>
</comment>
<comment type="PTM">
    <molecule>Assembly protein E3</molecule>
    <text evidence="2">N-glycosylated.</text>
</comment>
<comment type="PTM">
    <molecule>6K protein</molecule>
    <text evidence="2">Palmitoylated via thioester bonds.</text>
</comment>
<comment type="miscellaneous">
    <text evidence="10">Structural polyprotein: Translated from a subgenomic RNA synthesized during togavirus replication.</text>
</comment>
<comment type="sequence caution" evidence="15">
    <conflict type="frameshift">
        <sequence resource="EMBL-CDS" id="CAB59730"/>
    </conflict>
</comment>
<feature type="chain" id="PRO_0000238772" description="Capsid protein">
    <location>
        <begin position="1"/>
        <end position="283"/>
    </location>
</feature>
<feature type="chain" id="PRO_0000238773" description="Precursor of protein E3/E2" evidence="1">
    <location>
        <begin position="284"/>
        <end position="792"/>
    </location>
</feature>
<feature type="chain" id="PRO_0000238774" description="Assembly protein E3" evidence="1">
    <location>
        <begin position="284"/>
        <end position="354"/>
    </location>
</feature>
<feature type="chain" id="PRO_0000238775" description="Spike glycoprotein E2" evidence="1">
    <location>
        <begin position="355"/>
        <end position="792"/>
    </location>
</feature>
<feature type="chain" id="PRO_0000238776" description="6K protein" evidence="1">
    <location>
        <begin position="793"/>
        <end position="860"/>
    </location>
</feature>
<feature type="chain" id="PRO_0000238777" description="Spike glycoprotein E1" evidence="1">
    <location>
        <begin position="861"/>
        <end position="1322"/>
    </location>
</feature>
<feature type="topological domain" description="Extracellular" evidence="12">
    <location>
        <begin position="355"/>
        <end position="735"/>
    </location>
</feature>
<feature type="transmembrane region" description="Helical" evidence="12">
    <location>
        <begin position="736"/>
        <end position="756"/>
    </location>
</feature>
<feature type="topological domain" description="Cytoplasmic" evidence="12">
    <location>
        <begin position="757"/>
        <end position="792"/>
    </location>
</feature>
<feature type="topological domain" description="Extracellular" evidence="12">
    <location>
        <begin position="793"/>
        <end position="808"/>
    </location>
</feature>
<feature type="transmembrane region" description="Helical" evidence="12">
    <location>
        <begin position="809"/>
        <end position="829"/>
    </location>
</feature>
<feature type="topological domain" description="Cytoplasmic" evidence="12">
    <location>
        <begin position="830"/>
        <end position="834"/>
    </location>
</feature>
<feature type="transmembrane region" description="Helical" evidence="12">
    <location>
        <begin position="835"/>
        <end position="855"/>
    </location>
</feature>
<feature type="topological domain" description="Extracellular" evidence="12">
    <location>
        <begin position="856"/>
        <end position="1287"/>
    </location>
</feature>
<feature type="transmembrane region" description="Helical" evidence="12">
    <location>
        <begin position="1288"/>
        <end position="1309"/>
    </location>
</feature>
<feature type="topological domain" description="Cytoplasmic" evidence="12">
    <location>
        <begin position="1310"/>
        <end position="1322"/>
    </location>
</feature>
<feature type="domain" description="Peptidase S3" evidence="13">
    <location>
        <begin position="134"/>
        <end position="283"/>
    </location>
</feature>
<feature type="region of interest" description="Disordered" evidence="14">
    <location>
        <begin position="18"/>
        <end position="41"/>
    </location>
</feature>
<feature type="region of interest" description="Host transcription inhibition" evidence="5">
    <location>
        <begin position="48"/>
        <end position="81"/>
    </location>
</feature>
<feature type="region of interest" description="Disordered" evidence="14">
    <location>
        <begin position="61"/>
        <end position="128"/>
    </location>
</feature>
<feature type="region of interest" description="Binding to the viral RNA" evidence="8">
    <location>
        <begin position="101"/>
        <end position="135"/>
    </location>
</feature>
<feature type="region of interest" description="Ribosome-binding" evidence="8">
    <location>
        <begin position="120"/>
        <end position="134"/>
    </location>
</feature>
<feature type="region of interest" description="Dimerization of the capsid protein" evidence="6">
    <location>
        <begin position="203"/>
        <end position="213"/>
    </location>
</feature>
<feature type="region of interest" description="Dimerization of the capsid protein" evidence="6">
    <location>
        <begin position="240"/>
        <end position="244"/>
    </location>
</feature>
<feature type="region of interest" description="Functions as an uncleaved signal peptide for the precursor of protein E3/E2" evidence="2">
    <location>
        <begin position="284"/>
        <end position="303"/>
    </location>
</feature>
<feature type="region of interest" description="Transient transmembrane before p62-6K protein processing" evidence="12">
    <location>
        <begin position="761"/>
        <end position="785"/>
    </location>
</feature>
<feature type="region of interest" description="E1 fusion peptide loop" evidence="11">
    <location>
        <begin position="955"/>
        <end position="972"/>
    </location>
</feature>
<feature type="short sequence motif" description="Nuclear localization signal" evidence="5">
    <location>
        <begin position="74"/>
        <end position="120"/>
    </location>
</feature>
<feature type="short sequence motif" description="Nuclear export signal" evidence="5">
    <location>
        <begin position="165"/>
        <end position="175"/>
    </location>
</feature>
<feature type="compositionally biased region" description="Basic residues" evidence="14">
    <location>
        <begin position="73"/>
        <end position="86"/>
    </location>
</feature>
<feature type="compositionally biased region" description="Basic and acidic residues" evidence="14">
    <location>
        <begin position="101"/>
        <end position="113"/>
    </location>
</feature>
<feature type="active site" description="Charge relay system" evidence="13">
    <location>
        <position position="160"/>
    </location>
</feature>
<feature type="active site" description="Charge relay system" evidence="13">
    <location>
        <position position="182"/>
    </location>
</feature>
<feature type="active site" description="Charge relay system" evidence="13">
    <location>
        <position position="234"/>
    </location>
</feature>
<feature type="site" description="Involved in dimerization of the capsid protein" evidence="10">
    <location>
        <position position="207"/>
    </location>
</feature>
<feature type="site" description="Involved in dimerization of the capsid protein" evidence="10">
    <location>
        <position position="241"/>
    </location>
</feature>
<feature type="site" description="Cleavage; by autolysis" evidence="2">
    <location>
        <begin position="283"/>
        <end position="284"/>
    </location>
</feature>
<feature type="site" description="Cleavage; by host furin" evidence="2">
    <location>
        <begin position="354"/>
        <end position="355"/>
    </location>
</feature>
<feature type="site" description="Cleavage; by host signal peptidase" evidence="1">
    <location>
        <begin position="354"/>
        <end position="355"/>
    </location>
</feature>
<feature type="site" description="Cleavage; by host signal peptidase" evidence="2">
    <location>
        <begin position="792"/>
        <end position="793"/>
    </location>
</feature>
<feature type="site" description="Cleavage; by host signal peptidase" evidence="2">
    <location>
        <begin position="860"/>
        <end position="861"/>
    </location>
</feature>
<feature type="lipid moiety-binding region" description="S-palmitoyl cysteine; by host" evidence="3">
    <location>
        <position position="785"/>
    </location>
</feature>
<feature type="lipid moiety-binding region" description="S-palmitoyl cysteine; by host" evidence="3">
    <location>
        <position position="786"/>
    </location>
</feature>
<feature type="lipid moiety-binding region" description="S-stearoyl cysteine; by host" evidence="2">
    <location>
        <position position="1312"/>
    </location>
</feature>
<feature type="disulfide bond" evidence="4">
    <location>
        <begin position="298"/>
        <end position="307"/>
    </location>
</feature>
<feature type="disulfide bond" evidence="7">
    <location>
        <begin position="382"/>
        <end position="488"/>
    </location>
</feature>
<feature type="disulfide bond" evidence="7">
    <location>
        <begin position="385"/>
        <end position="390"/>
    </location>
</feature>
<feature type="disulfide bond" evidence="7">
    <location>
        <begin position="455"/>
        <end position="469"/>
    </location>
</feature>
<feature type="disulfide bond" evidence="7">
    <location>
        <begin position="517"/>
        <end position="634"/>
    </location>
</feature>
<feature type="disulfide bond" evidence="7">
    <location>
        <begin position="910"/>
        <end position="985"/>
    </location>
</feature>
<feature type="disulfide bond" evidence="7">
    <location>
        <begin position="923"/>
        <end position="965"/>
    </location>
</feature>
<feature type="disulfide bond" evidence="7">
    <location>
        <begin position="924"/>
        <end position="967"/>
    </location>
</feature>
<feature type="disulfide bond" evidence="7">
    <location>
        <begin position="929"/>
        <end position="949"/>
    </location>
</feature>
<feature type="disulfide bond" evidence="7">
    <location>
        <begin position="1135"/>
        <end position="1147"/>
    </location>
</feature>
<feature type="disulfide bond" evidence="7">
    <location>
        <begin position="1177"/>
        <end position="1253"/>
    </location>
</feature>
<feature type="disulfide bond" evidence="7">
    <location>
        <begin position="1182"/>
        <end position="1257"/>
    </location>
</feature>
<feature type="disulfide bond" evidence="7">
    <location>
        <begin position="1204"/>
        <end position="1247"/>
    </location>
</feature>
<feature type="sequence conflict" description="In Ref. 1; CAB59730." evidence="15" ref="1">
    <original>V</original>
    <variation>L</variation>
    <location>
        <position position="69"/>
    </location>
</feature>
<feature type="sequence conflict" description="In Ref. 1; CAB59730." evidence="15" ref="1">
    <original>R</original>
    <variation>P</variation>
    <location>
        <position position="72"/>
    </location>
</feature>
<feature type="sequence conflict" description="In Ref. 1." evidence="15" ref="1">
    <original>V</original>
    <variation>L</variation>
    <location>
        <position position="138"/>
    </location>
</feature>
<keyword id="KW-0167">Capsid protein</keyword>
<keyword id="KW-0165">Cleavage on pair of basic residues</keyword>
<keyword id="KW-1015">Disulfide bond</keyword>
<keyword id="KW-1170">Fusion of virus membrane with host endosomal membrane</keyword>
<keyword id="KW-1168">Fusion of virus membrane with host membrane</keyword>
<keyword id="KW-0325">Glycoprotein</keyword>
<keyword id="KW-1032">Host cell membrane</keyword>
<keyword id="KW-1035">Host cytoplasm</keyword>
<keyword id="KW-1038">Host endoplasmic reticulum</keyword>
<keyword id="KW-1040">Host Golgi apparatus</keyword>
<keyword id="KW-1043">Host membrane</keyword>
<keyword id="KW-1048">Host nucleus</keyword>
<keyword id="KW-0945">Host-virus interaction</keyword>
<keyword id="KW-0378">Hydrolase</keyword>
<keyword id="KW-0407">Ion channel</keyword>
<keyword id="KW-0406">Ion transport</keyword>
<keyword id="KW-0449">Lipoprotein</keyword>
<keyword id="KW-0472">Membrane</keyword>
<keyword id="KW-0564">Palmitate</keyword>
<keyword id="KW-0645">Protease</keyword>
<keyword id="KW-0694">RNA-binding</keyword>
<keyword id="KW-0720">Serine protease</keyword>
<keyword id="KW-1144">T=4 icosahedral capsid protein</keyword>
<keyword id="KW-0812">Transmembrane</keyword>
<keyword id="KW-1133">Transmembrane helix</keyword>
<keyword id="KW-0813">Transport</keyword>
<keyword id="KW-1161">Viral attachment to host cell</keyword>
<keyword id="KW-1234">Viral attachment to host entry receptor</keyword>
<keyword id="KW-1182">Viral ion channel</keyword>
<keyword id="KW-1162">Viral penetration into host cytoplasm</keyword>
<keyword id="KW-0946">Virion</keyword>
<keyword id="KW-1160">Virus entry into host cell</keyword>
<evidence type="ECO:0000250" key="1"/>
<evidence type="ECO:0000250" key="2">
    <source>
        <dbReference type="UniProtKB" id="P03315"/>
    </source>
</evidence>
<evidence type="ECO:0000250" key="3">
    <source>
        <dbReference type="UniProtKB" id="P03316"/>
    </source>
</evidence>
<evidence type="ECO:0000250" key="4">
    <source>
        <dbReference type="UniProtKB" id="P08768"/>
    </source>
</evidence>
<evidence type="ECO:0000250" key="5">
    <source>
        <dbReference type="UniProtKB" id="P09592"/>
    </source>
</evidence>
<evidence type="ECO:0000250" key="6">
    <source>
        <dbReference type="UniProtKB" id="P0DOK1"/>
    </source>
</evidence>
<evidence type="ECO:0000250" key="7">
    <source>
        <dbReference type="UniProtKB" id="P13897"/>
    </source>
</evidence>
<evidence type="ECO:0000250" key="8">
    <source>
        <dbReference type="UniProtKB" id="P27284"/>
    </source>
</evidence>
<evidence type="ECO:0000250" key="9">
    <source>
        <dbReference type="UniProtKB" id="Q5XXP3"/>
    </source>
</evidence>
<evidence type="ECO:0000250" key="10">
    <source>
        <dbReference type="UniProtKB" id="Q86925"/>
    </source>
</evidence>
<evidence type="ECO:0000250" key="11">
    <source>
        <dbReference type="UniProtKB" id="Q8JUX5"/>
    </source>
</evidence>
<evidence type="ECO:0000255" key="12"/>
<evidence type="ECO:0000255" key="13">
    <source>
        <dbReference type="PROSITE-ProRule" id="PRU01027"/>
    </source>
</evidence>
<evidence type="ECO:0000256" key="14">
    <source>
        <dbReference type="SAM" id="MobiDB-lite"/>
    </source>
</evidence>
<evidence type="ECO:0000305" key="15"/>
<sequence length="1322" mass="143209">MFPMQFTNSAYRQMEPMFAPASRGQVQPYRPRTKRRQEPQVGNAAIAALANQMSALQLQVAGLAGQARVDRRGPRRVQKNKQKKKNSSNGEKPKEKKKKQKQQEKKGSGGEKAKKPRNRPGKEVRISVKRARQSTFPVYHDGAISGYAVLIGSRVFKPAHVKGKFDHPELADIKFQVAEVMDLEAAAYPKCMRDQAAEPATMMDGVYNGEYGNIQEWRTILYSMRAAEASRGDSGRPFTDNSGKVVGIVLGGGPDGRRTRLSVIGFDKKLKAREIAYSEAIPWTRAPALLLLPMVIACTYNSNTFDCSKPSCQDCCITAEPKKAMTMLKDNLNDPNYWDLLIAVTTCSSARKKRAVSTSPVAVYDTQILAAHAAASPYRAYCPDCDGTACISPIAIDEVVSSGSDHVLRIRVGSQSGVTAKGGAAGETSLRYLGRDGKVYAADNTRLVVRTTAKCDVLQATGHYILANCPVGQSLTVAATLDGTRHQCTTVFEHQVTEKFTRERSKGHHLSDLTKKCTRFSTTPKKSALYLVDVYDALPTSVEISTVVTCNERQCTVRVPPGTTVKFDKRCKNAAKETVTFTSDSQTFTCEEPVLTAASITQGKPHLRSSMLPSGGKEVKARIPFPFPPETATCRVSIAPLPSITYEESDVLLAGTAKYPVLLTTRNLGFHSNATSEWIQGKYLRRIPVTPQGIELMLGNNAPLHFWSSVRYASGDADAYPWELLVHHIKHHPEYAWAFVGVACGLLAVAACMFACACNRVRYSLLANTFNPNPPPLTALTAALCCIPGARADQPYLDIIAYLWTNSKVAFGLQCAAPVACMLIVTYALRHCRLCCNSFLGVRGWSALLVILAYVQSCKAYEHTVVVPMDPRAPSYEAVINRNGYDPLKLTIAVNFTVISPTTALEYWTCAGVPVVEPPHVGCCTSVSCPSDLSTLHAFTGKAVSDVHCDVHTNVYPLLWGAAHCFCSTENTQVSAVAATVSEFCAQDSERAEAFSVHSSSVTAEILVTLGEVVTAVHVYVDGVTSARGTDLKIVAGPITTDYSPFDRKVVRIGEEVYNYDWPPYGAGRPGTFGDIQARSTNYVKPNDLYGDIGIEVLQPTNDHVHVAYTYTTSGLLRWLQDAPKPLSVTAPHGCKISANPLLALDCGVGAVPMSINIPDAKFTRKLKDPKPSALKCVVDSCEYGVDYGGAATITYEGHEAGKCGIHSLTPGVPLRTSVVEVVAGANTVKTTFSSPTPEVTLEVEICSAIVKCASECTPPKEHVVAARPRHGSDTGGYISGPAMRWAGRIVGNPSGPVSSSLAVTYCVVKKCRSKRIRIVKS</sequence>
<name>POLS_SAV2</name>
<protein>
    <recommendedName>
        <fullName>Structural polyprotein</fullName>
    </recommendedName>
    <alternativeName>
        <fullName>p130</fullName>
    </alternativeName>
    <component>
        <recommendedName>
            <fullName>Capsid protein</fullName>
            <ecNumber evidence="2">3.4.21.90</ecNumber>
        </recommendedName>
        <alternativeName>
            <fullName>Coat protein</fullName>
            <shortName>C</shortName>
        </alternativeName>
    </component>
    <component>
        <recommendedName>
            <fullName>Precursor of protein E3/E2</fullName>
        </recommendedName>
        <alternativeName>
            <fullName>p62</fullName>
        </alternativeName>
        <alternativeName>
            <fullName>pE2</fullName>
        </alternativeName>
    </component>
    <component>
        <recommendedName>
            <fullName>Assembly protein E3</fullName>
        </recommendedName>
    </component>
    <component>
        <recommendedName>
            <fullName>Spike glycoprotein E2</fullName>
        </recommendedName>
        <alternativeName>
            <fullName>E2 envelope glycoprotein</fullName>
        </alternativeName>
    </component>
    <component>
        <recommendedName>
            <fullName>6K protein</fullName>
        </recommendedName>
    </component>
    <component>
        <recommendedName>
            <fullName>Spike glycoprotein E1</fullName>
        </recommendedName>
        <alternativeName>
            <fullName>E1 envelope glycoprotein</fullName>
        </alternativeName>
    </component>
</protein>
<organism>
    <name type="scientific">Alphavirus salmon subtype 2</name>
    <name type="common">SAV2</name>
    <name type="synonym">Sleeping disease virus</name>
    <dbReference type="NCBI Taxonomy" id="78540"/>
    <lineage>
        <taxon>Viruses</taxon>
        <taxon>Riboviria</taxon>
        <taxon>Orthornavirae</taxon>
        <taxon>Kitrinoviricota</taxon>
        <taxon>Alsuviricetes</taxon>
        <taxon>Martellivirales</taxon>
        <taxon>Togaviridae</taxon>
        <taxon>Alphavirus</taxon>
        <taxon>Alphavirus salmon subtype 1</taxon>
    </lineage>
</organism>
<dbReference type="EC" id="3.4.21.90" evidence="2"/>
<dbReference type="EMBL" id="AJ238578">
    <property type="protein sequence ID" value="CAB59730.1"/>
    <property type="status" value="ALT_FRAME"/>
    <property type="molecule type" value="Genomic_RNA"/>
</dbReference>
<dbReference type="EMBL" id="AJ316246">
    <property type="protein sequence ID" value="CAC87661.1"/>
    <property type="molecule type" value="Genomic_RNA"/>
</dbReference>
<dbReference type="RefSeq" id="NP_598185.1">
    <property type="nucleotide sequence ID" value="NC_003433.1"/>
</dbReference>
<dbReference type="SMR" id="Q8QL52"/>
<dbReference type="GeneID" id="1729818"/>
<dbReference type="KEGG" id="vg:1729818"/>
<dbReference type="Proteomes" id="UP000006568">
    <property type="component" value="Segment"/>
</dbReference>
<dbReference type="GO" id="GO:0030430">
    <property type="term" value="C:host cell cytoplasm"/>
    <property type="evidence" value="ECO:0007669"/>
    <property type="project" value="UniProtKB-SubCell"/>
</dbReference>
<dbReference type="GO" id="GO:0042025">
    <property type="term" value="C:host cell nucleus"/>
    <property type="evidence" value="ECO:0007669"/>
    <property type="project" value="UniProtKB-SubCell"/>
</dbReference>
<dbReference type="GO" id="GO:0020002">
    <property type="term" value="C:host cell plasma membrane"/>
    <property type="evidence" value="ECO:0007669"/>
    <property type="project" value="UniProtKB-SubCell"/>
</dbReference>
<dbReference type="GO" id="GO:0016020">
    <property type="term" value="C:membrane"/>
    <property type="evidence" value="ECO:0007669"/>
    <property type="project" value="UniProtKB-KW"/>
</dbReference>
<dbReference type="GO" id="GO:0039619">
    <property type="term" value="C:T=4 icosahedral viral capsid"/>
    <property type="evidence" value="ECO:0007669"/>
    <property type="project" value="UniProtKB-KW"/>
</dbReference>
<dbReference type="GO" id="GO:0055036">
    <property type="term" value="C:virion membrane"/>
    <property type="evidence" value="ECO:0007669"/>
    <property type="project" value="UniProtKB-SubCell"/>
</dbReference>
<dbReference type="GO" id="GO:0003723">
    <property type="term" value="F:RNA binding"/>
    <property type="evidence" value="ECO:0007669"/>
    <property type="project" value="UniProtKB-KW"/>
</dbReference>
<dbReference type="GO" id="GO:0004252">
    <property type="term" value="F:serine-type endopeptidase activity"/>
    <property type="evidence" value="ECO:0007669"/>
    <property type="project" value="InterPro"/>
</dbReference>
<dbReference type="GO" id="GO:0005198">
    <property type="term" value="F:structural molecule activity"/>
    <property type="evidence" value="ECO:0007669"/>
    <property type="project" value="InterPro"/>
</dbReference>
<dbReference type="GO" id="GO:0039654">
    <property type="term" value="P:fusion of virus membrane with host endosome membrane"/>
    <property type="evidence" value="ECO:0007669"/>
    <property type="project" value="UniProtKB-KW"/>
</dbReference>
<dbReference type="GO" id="GO:0006508">
    <property type="term" value="P:proteolysis"/>
    <property type="evidence" value="ECO:0007669"/>
    <property type="project" value="UniProtKB-KW"/>
</dbReference>
<dbReference type="GO" id="GO:0046718">
    <property type="term" value="P:symbiont entry into host cell"/>
    <property type="evidence" value="ECO:0007669"/>
    <property type="project" value="UniProtKB-KW"/>
</dbReference>
<dbReference type="GO" id="GO:0039722">
    <property type="term" value="P:symbiont-mediated suppression of host toll-like receptor signaling pathway"/>
    <property type="evidence" value="ECO:0000250"/>
    <property type="project" value="UniProtKB"/>
</dbReference>
<dbReference type="GO" id="GO:0019062">
    <property type="term" value="P:virion attachment to host cell"/>
    <property type="evidence" value="ECO:0007669"/>
    <property type="project" value="UniProtKB-KW"/>
</dbReference>
<dbReference type="Gene3D" id="1.10.287.2230">
    <property type="match status" value="1"/>
</dbReference>
<dbReference type="Gene3D" id="2.60.40.350">
    <property type="match status" value="1"/>
</dbReference>
<dbReference type="Gene3D" id="2.60.40.3200">
    <property type="entry name" value="Alphavirus E2 glycoprotein, A domain"/>
    <property type="match status" value="1"/>
</dbReference>
<dbReference type="Gene3D" id="2.60.40.4310">
    <property type="entry name" value="Alphavirus E2 glycoprotein, domain B"/>
    <property type="match status" value="1"/>
</dbReference>
<dbReference type="Gene3D" id="2.60.40.2400">
    <property type="entry name" value="Alphavirus E2 glycoprotein, domain C"/>
    <property type="match status" value="1"/>
</dbReference>
<dbReference type="Gene3D" id="2.60.98.10">
    <property type="entry name" value="Tick-borne Encephalitis virus Glycoprotein, domain 1"/>
    <property type="match status" value="3"/>
</dbReference>
<dbReference type="Gene3D" id="2.40.10.10">
    <property type="entry name" value="Trypsin-like serine proteases"/>
    <property type="match status" value="2"/>
</dbReference>
<dbReference type="InterPro" id="IPR002548">
    <property type="entry name" value="Alpha_E1_glycop"/>
</dbReference>
<dbReference type="InterPro" id="IPR000936">
    <property type="entry name" value="Alpha_E2_glycop"/>
</dbReference>
<dbReference type="InterPro" id="IPR002533">
    <property type="entry name" value="Alpha_E3_glycop"/>
</dbReference>
<dbReference type="InterPro" id="IPR042304">
    <property type="entry name" value="Alphavir_E2_A"/>
</dbReference>
<dbReference type="InterPro" id="IPR042305">
    <property type="entry name" value="Alphavir_E2_B"/>
</dbReference>
<dbReference type="InterPro" id="IPR042306">
    <property type="entry name" value="Alphavir_E2_C"/>
</dbReference>
<dbReference type="InterPro" id="IPR000336">
    <property type="entry name" value="Flavivir/Alphavir_Ig-like_sf"/>
</dbReference>
<dbReference type="InterPro" id="IPR036253">
    <property type="entry name" value="Glycoprot_cen/dimer_sf"/>
</dbReference>
<dbReference type="InterPro" id="IPR038055">
    <property type="entry name" value="Glycoprot_E_dimer_dom"/>
</dbReference>
<dbReference type="InterPro" id="IPR014756">
    <property type="entry name" value="Ig_E-set"/>
</dbReference>
<dbReference type="InterPro" id="IPR009003">
    <property type="entry name" value="Peptidase_S1_PA"/>
</dbReference>
<dbReference type="InterPro" id="IPR043504">
    <property type="entry name" value="Peptidase_S1_PA_chymotrypsin"/>
</dbReference>
<dbReference type="InterPro" id="IPR000930">
    <property type="entry name" value="Peptidase_S3"/>
</dbReference>
<dbReference type="Pfam" id="PF01589">
    <property type="entry name" value="Alpha_E1_glycop"/>
    <property type="match status" value="1"/>
</dbReference>
<dbReference type="Pfam" id="PF00943">
    <property type="entry name" value="Alpha_E2_glycop"/>
    <property type="match status" value="1"/>
</dbReference>
<dbReference type="Pfam" id="PF01563">
    <property type="entry name" value="Alpha_E3_glycop"/>
    <property type="match status" value="1"/>
</dbReference>
<dbReference type="Pfam" id="PF00944">
    <property type="entry name" value="Peptidase_S3"/>
    <property type="match status" value="1"/>
</dbReference>
<dbReference type="PRINTS" id="PR00798">
    <property type="entry name" value="TOGAVIRIN"/>
</dbReference>
<dbReference type="SUPFAM" id="SSF81296">
    <property type="entry name" value="E set domains"/>
    <property type="match status" value="1"/>
</dbReference>
<dbReference type="SUPFAM" id="SSF50494">
    <property type="entry name" value="Trypsin-like serine proteases"/>
    <property type="match status" value="1"/>
</dbReference>
<dbReference type="SUPFAM" id="SSF56983">
    <property type="entry name" value="Viral glycoprotein, central and dimerisation domains"/>
    <property type="match status" value="1"/>
</dbReference>
<dbReference type="PROSITE" id="PS51690">
    <property type="entry name" value="ALPHAVIRUS_CP"/>
    <property type="match status" value="1"/>
</dbReference>